<reference key="1">
    <citation type="journal article" date="2012" name="PLoS ONE">
        <title>Identification and phylogenetic analysis of Tityus pachyurus and Tityus obscurus novel putative Na+-channel scorpion toxins.</title>
        <authorList>
            <person name="Guerrero-Vargas J.A."/>
            <person name="Mourao C.B."/>
            <person name="Quintero-Hernandez V."/>
            <person name="Possani L.D."/>
            <person name="Schwartz E.F."/>
        </authorList>
    </citation>
    <scope>NUCLEOTIDE SEQUENCE [MRNA]</scope>
    <scope>NOMENCLATURE</scope>
    <source>
        <tissue>Venom gland</tissue>
    </source>
</reference>
<organism>
    <name type="scientific">Tityus obscurus</name>
    <name type="common">Amazonian scorpion</name>
    <name type="synonym">Tityus cambridgei</name>
    <dbReference type="NCBI Taxonomy" id="1221240"/>
    <lineage>
        <taxon>Eukaryota</taxon>
        <taxon>Metazoa</taxon>
        <taxon>Ecdysozoa</taxon>
        <taxon>Arthropoda</taxon>
        <taxon>Chelicerata</taxon>
        <taxon>Arachnida</taxon>
        <taxon>Scorpiones</taxon>
        <taxon>Buthida</taxon>
        <taxon>Buthoidea</taxon>
        <taxon>Buthidae</taxon>
        <taxon>Tityus</taxon>
    </lineage>
</organism>
<feature type="signal peptide" evidence="2">
    <location>
        <begin position="1"/>
        <end position="19"/>
    </location>
</feature>
<feature type="chain" id="PRO_5000851442" description="Toxin To15">
    <location>
        <begin position="20"/>
        <end position="83"/>
    </location>
</feature>
<feature type="domain" description="LCN-type CS-alpha/beta" evidence="3">
    <location>
        <begin position="21"/>
        <end position="82"/>
    </location>
</feature>
<feature type="disulfide bond" evidence="3">
    <location>
        <begin position="31"/>
        <end position="81"/>
    </location>
</feature>
<feature type="disulfide bond" evidence="3">
    <location>
        <begin position="35"/>
        <end position="57"/>
    </location>
</feature>
<feature type="disulfide bond" evidence="3">
    <location>
        <begin position="43"/>
        <end position="62"/>
    </location>
</feature>
<feature type="disulfide bond" evidence="3">
    <location>
        <begin position="47"/>
        <end position="64"/>
    </location>
</feature>
<protein>
    <recommendedName>
        <fullName>Toxin To15</fullName>
    </recommendedName>
    <alternativeName>
        <fullName>T-beta* NaTx1.4</fullName>
    </alternativeName>
</protein>
<evidence type="ECO:0000250" key="1"/>
<evidence type="ECO:0000255" key="2"/>
<evidence type="ECO:0000255" key="3">
    <source>
        <dbReference type="PROSITE-ProRule" id="PRU01210"/>
    </source>
</evidence>
<evidence type="ECO:0000305" key="4"/>
<name>SCX15_TITOB</name>
<comment type="function">
    <text evidence="1">Beta toxins bind voltage-independently at site-4 of sodium channels (Nav) and shift the voltage of activation toward more negative potentials thereby affecting sodium channel activation and promoting spontaneous and repetitive firing.</text>
</comment>
<comment type="subcellular location">
    <subcellularLocation>
        <location>Secreted</location>
    </subcellularLocation>
</comment>
<comment type="tissue specificity">
    <text>Expressed by the venom gland.</text>
</comment>
<comment type="domain">
    <text evidence="4">Has the structural arrangement of an alpha-helix connected to antiparallel beta-sheets by disulfide bonds (CS-alpha/beta).</text>
</comment>
<comment type="similarity">
    <text evidence="4">Belongs to the long (4 C-C) scorpion toxin superfamily. Sodium channel inhibitor family. Beta subfamily.</text>
</comment>
<proteinExistence type="evidence at transcript level"/>
<sequence length="83" mass="9230">MKGIILLISCLMLIEVVVGGKEGYPLDSSGCKAGCFFGTNSWCNTECKRKSAAKGYCAWPSCYCYEFTDDSKIWNAKTNKCYK</sequence>
<dbReference type="EMBL" id="HE585238">
    <property type="protein sequence ID" value="CCD31432.1"/>
    <property type="molecule type" value="mRNA"/>
</dbReference>
<dbReference type="SMR" id="H1ZZI4"/>
<dbReference type="GO" id="GO:0005576">
    <property type="term" value="C:extracellular region"/>
    <property type="evidence" value="ECO:0007669"/>
    <property type="project" value="UniProtKB-SubCell"/>
</dbReference>
<dbReference type="GO" id="GO:0019871">
    <property type="term" value="F:sodium channel inhibitor activity"/>
    <property type="evidence" value="ECO:0007669"/>
    <property type="project" value="InterPro"/>
</dbReference>
<dbReference type="GO" id="GO:0090729">
    <property type="term" value="F:toxin activity"/>
    <property type="evidence" value="ECO:0007669"/>
    <property type="project" value="UniProtKB-KW"/>
</dbReference>
<dbReference type="CDD" id="cd23106">
    <property type="entry name" value="neurotoxins_LC_scorpion"/>
    <property type="match status" value="1"/>
</dbReference>
<dbReference type="FunFam" id="3.30.30.10:FF:000002">
    <property type="entry name" value="Alpha-like toxin BmK-M1"/>
    <property type="match status" value="1"/>
</dbReference>
<dbReference type="Gene3D" id="3.30.30.10">
    <property type="entry name" value="Knottin, scorpion toxin-like"/>
    <property type="match status" value="1"/>
</dbReference>
<dbReference type="InterPro" id="IPR044062">
    <property type="entry name" value="LCN-type_CS_alpha_beta_dom"/>
</dbReference>
<dbReference type="InterPro" id="IPR036574">
    <property type="entry name" value="Scorpion_toxin-like_sf"/>
</dbReference>
<dbReference type="InterPro" id="IPR018218">
    <property type="entry name" value="Scorpion_toxinL"/>
</dbReference>
<dbReference type="InterPro" id="IPR002061">
    <property type="entry name" value="Scorpion_toxinL/defensin"/>
</dbReference>
<dbReference type="Pfam" id="PF00537">
    <property type="entry name" value="Toxin_3"/>
    <property type="match status" value="1"/>
</dbReference>
<dbReference type="PRINTS" id="PR00285">
    <property type="entry name" value="SCORPNTOXIN"/>
</dbReference>
<dbReference type="SUPFAM" id="SSF57095">
    <property type="entry name" value="Scorpion toxin-like"/>
    <property type="match status" value="1"/>
</dbReference>
<dbReference type="PROSITE" id="PS51863">
    <property type="entry name" value="LCN_CSAB"/>
    <property type="match status" value="1"/>
</dbReference>
<accession>H1ZZI4</accession>
<keyword id="KW-1015">Disulfide bond</keyword>
<keyword id="KW-0872">Ion channel impairing toxin</keyword>
<keyword id="KW-0528">Neurotoxin</keyword>
<keyword id="KW-0964">Secreted</keyword>
<keyword id="KW-0732">Signal</keyword>
<keyword id="KW-0800">Toxin</keyword>
<keyword id="KW-0738">Voltage-gated sodium channel impairing toxin</keyword>